<proteinExistence type="inferred from homology"/>
<evidence type="ECO:0000250" key="1">
    <source>
        <dbReference type="UniProtKB" id="P27467"/>
    </source>
</evidence>
<evidence type="ECO:0000250" key="2">
    <source>
        <dbReference type="UniProtKB" id="P28026"/>
    </source>
</evidence>
<evidence type="ECO:0000250" key="3">
    <source>
        <dbReference type="UniProtKB" id="P56704"/>
    </source>
</evidence>
<evidence type="ECO:0000255" key="4"/>
<evidence type="ECO:0000305" key="5"/>
<dbReference type="EMBL" id="M91293">
    <property type="protein sequence ID" value="AAA49461.1"/>
    <property type="molecule type" value="Genomic_DNA"/>
</dbReference>
<dbReference type="SMR" id="P28136"/>
<dbReference type="GlyCosmos" id="P28136">
    <property type="glycosylation" value="2 sites, No reported glycans"/>
</dbReference>
<dbReference type="GO" id="GO:0005615">
    <property type="term" value="C:extracellular space"/>
    <property type="evidence" value="ECO:0007669"/>
    <property type="project" value="TreeGrafter"/>
</dbReference>
<dbReference type="GO" id="GO:0005125">
    <property type="term" value="F:cytokine activity"/>
    <property type="evidence" value="ECO:0007669"/>
    <property type="project" value="TreeGrafter"/>
</dbReference>
<dbReference type="GO" id="GO:0005109">
    <property type="term" value="F:frizzled binding"/>
    <property type="evidence" value="ECO:0007669"/>
    <property type="project" value="TreeGrafter"/>
</dbReference>
<dbReference type="GO" id="GO:0060070">
    <property type="term" value="P:canonical Wnt signaling pathway"/>
    <property type="evidence" value="ECO:0007669"/>
    <property type="project" value="TreeGrafter"/>
</dbReference>
<dbReference type="GO" id="GO:0045165">
    <property type="term" value="P:cell fate commitment"/>
    <property type="evidence" value="ECO:0007669"/>
    <property type="project" value="TreeGrafter"/>
</dbReference>
<dbReference type="GO" id="GO:0042692">
    <property type="term" value="P:muscle cell differentiation"/>
    <property type="evidence" value="ECO:0000250"/>
    <property type="project" value="UniProtKB"/>
</dbReference>
<dbReference type="GO" id="GO:0030182">
    <property type="term" value="P:neuron differentiation"/>
    <property type="evidence" value="ECO:0007669"/>
    <property type="project" value="TreeGrafter"/>
</dbReference>
<dbReference type="GO" id="GO:1904105">
    <property type="term" value="P:positive regulation of convergent extension involved in gastrulation"/>
    <property type="evidence" value="ECO:0000250"/>
    <property type="project" value="UniProtKB"/>
</dbReference>
<dbReference type="GO" id="GO:2000052">
    <property type="term" value="P:positive regulation of non-canonical Wnt signaling pathway"/>
    <property type="evidence" value="ECO:0000250"/>
    <property type="project" value="UniProtKB"/>
</dbReference>
<dbReference type="Gene3D" id="3.30.2460.20">
    <property type="match status" value="1"/>
</dbReference>
<dbReference type="InterPro" id="IPR005817">
    <property type="entry name" value="Wnt"/>
</dbReference>
<dbReference type="InterPro" id="IPR043158">
    <property type="entry name" value="Wnt_C"/>
</dbReference>
<dbReference type="PANTHER" id="PTHR12027:SF77">
    <property type="entry name" value="PROTEIN WNT-5"/>
    <property type="match status" value="1"/>
</dbReference>
<dbReference type="PANTHER" id="PTHR12027">
    <property type="entry name" value="WNT RELATED"/>
    <property type="match status" value="1"/>
</dbReference>
<dbReference type="Pfam" id="PF00110">
    <property type="entry name" value="wnt"/>
    <property type="match status" value="1"/>
</dbReference>
<dbReference type="SMART" id="SM00097">
    <property type="entry name" value="WNT1"/>
    <property type="match status" value="1"/>
</dbReference>
<feature type="chain" id="PRO_0000200634" description="Protein Wnt-5b">
    <location>
        <begin position="1" status="less than"/>
        <end position="116" status="greater than"/>
    </location>
</feature>
<feature type="lipid moiety-binding region" description="O-palmitoleoyl serine; by PORCN" evidence="3">
    <location>
        <position position="1"/>
    </location>
</feature>
<feature type="glycosylation site" description="N-linked (GlcNAc...) asparagine" evidence="4">
    <location>
        <position position="69"/>
    </location>
</feature>
<feature type="glycosylation site" description="N-linked (GlcNAc...) asparagine" evidence="4">
    <location>
        <position position="83"/>
    </location>
</feature>
<feature type="disulfide bond" evidence="2">
    <location>
        <begin position="82"/>
        <end position="97"/>
    </location>
</feature>
<feature type="non-terminal residue">
    <location>
        <position position="1"/>
    </location>
</feature>
<feature type="non-terminal residue">
    <location>
        <position position="116"/>
    </location>
</feature>
<reference key="1">
    <citation type="journal article" date="1992" name="Proc. Natl. Acad. Sci. U.S.A.">
        <title>Diversification of the Wnt gene family on the ancestral lineage of vertebrates.</title>
        <authorList>
            <person name="Sidow A."/>
        </authorList>
    </citation>
    <scope>NUCLEOTIDE SEQUENCE [GENOMIC DNA]</scope>
</reference>
<name>WNT5B_PLEJO</name>
<protein>
    <recommendedName>
        <fullName>Protein Wnt-5b</fullName>
    </recommendedName>
</protein>
<keyword id="KW-0217">Developmental protein</keyword>
<keyword id="KW-1015">Disulfide bond</keyword>
<keyword id="KW-0272">Extracellular matrix</keyword>
<keyword id="KW-0325">Glycoprotein</keyword>
<keyword id="KW-0449">Lipoprotein</keyword>
<keyword id="KW-0964">Secreted</keyword>
<keyword id="KW-0879">Wnt signaling pathway</keyword>
<comment type="function">
    <text>Ligand for members of the frizzled family of seven transmembrane receptors. Probable developmental protein. May be a signaling molecule which affects the development of discrete regions of tissues. Is likely to signal over only few cell diameters.</text>
</comment>
<comment type="subcellular location">
    <subcellularLocation>
        <location>Secreted</location>
        <location>Extracellular space</location>
        <location>Extracellular matrix</location>
    </subcellularLocation>
</comment>
<comment type="PTM">
    <text evidence="1 3">Palmitoleoylation is required for efficient binding to frizzled receptors. Depalmitoleoylation leads to Wnt signaling pathway inhibition.</text>
</comment>
<comment type="similarity">
    <text evidence="5">Belongs to the Wnt family.</text>
</comment>
<sequence length="116" mass="13078">SGSCSLKTCWLQLADFRKVGDHLKEKYDSAAAMRINRKGKLELVNSRFNTPTVEDLVYTDQSPDYCLRNESTGSMGTLGRLCNKTSEGMDGCELMCCGRGYDQFKTVQVERCHCKF</sequence>
<accession>P28136</accession>
<organism>
    <name type="scientific">Plethodon jordani</name>
    <name type="common">Red-cheeked salamander</name>
    <dbReference type="NCBI Taxonomy" id="8336"/>
    <lineage>
        <taxon>Eukaryota</taxon>
        <taxon>Metazoa</taxon>
        <taxon>Chordata</taxon>
        <taxon>Craniata</taxon>
        <taxon>Vertebrata</taxon>
        <taxon>Euteleostomi</taxon>
        <taxon>Amphibia</taxon>
        <taxon>Batrachia</taxon>
        <taxon>Caudata</taxon>
        <taxon>Salamandroidea</taxon>
        <taxon>Plethodontidae</taxon>
        <taxon>Plethodontinae</taxon>
        <taxon>Plethodon</taxon>
    </lineage>
</organism>
<gene>
    <name type="primary">WNT-5B</name>
</gene>